<keyword id="KW-0066">ATP synthesis</keyword>
<keyword id="KW-0997">Cell inner membrane</keyword>
<keyword id="KW-1003">Cell membrane</keyword>
<keyword id="KW-0139">CF(1)</keyword>
<keyword id="KW-0375">Hydrogen ion transport</keyword>
<keyword id="KW-0406">Ion transport</keyword>
<keyword id="KW-0472">Membrane</keyword>
<keyword id="KW-0813">Transport</keyword>
<name>ATPG_BRUSU</name>
<gene>
    <name evidence="1" type="primary">atpG</name>
    <name type="ordered locus">BR1800</name>
    <name type="ordered locus">BS1330_I1794</name>
</gene>
<accession>Q8FYR4</accession>
<accession>G0K7D6</accession>
<protein>
    <recommendedName>
        <fullName evidence="1">ATP synthase gamma chain</fullName>
    </recommendedName>
    <alternativeName>
        <fullName evidence="1">ATP synthase F1 sector gamma subunit</fullName>
    </alternativeName>
    <alternativeName>
        <fullName evidence="1">F-ATPase gamma subunit</fullName>
    </alternativeName>
</protein>
<reference key="1">
    <citation type="journal article" date="2002" name="Proc. Natl. Acad. Sci. U.S.A.">
        <title>The Brucella suis genome reveals fundamental similarities between animal and plant pathogens and symbionts.</title>
        <authorList>
            <person name="Paulsen I.T."/>
            <person name="Seshadri R."/>
            <person name="Nelson K.E."/>
            <person name="Eisen J.A."/>
            <person name="Heidelberg J.F."/>
            <person name="Read T.D."/>
            <person name="Dodson R.J."/>
            <person name="Umayam L.A."/>
            <person name="Brinkac L.M."/>
            <person name="Beanan M.J."/>
            <person name="Daugherty S.C."/>
            <person name="DeBoy R.T."/>
            <person name="Durkin A.S."/>
            <person name="Kolonay J.F."/>
            <person name="Madupu R."/>
            <person name="Nelson W.C."/>
            <person name="Ayodeji B."/>
            <person name="Kraul M."/>
            <person name="Shetty J."/>
            <person name="Malek J.A."/>
            <person name="Van Aken S.E."/>
            <person name="Riedmuller S."/>
            <person name="Tettelin H."/>
            <person name="Gill S.R."/>
            <person name="White O."/>
            <person name="Salzberg S.L."/>
            <person name="Hoover D.L."/>
            <person name="Lindler L.E."/>
            <person name="Halling S.M."/>
            <person name="Boyle S.M."/>
            <person name="Fraser C.M."/>
        </authorList>
    </citation>
    <scope>NUCLEOTIDE SEQUENCE [LARGE SCALE GENOMIC DNA]</scope>
    <source>
        <strain>1330</strain>
    </source>
</reference>
<reference key="2">
    <citation type="journal article" date="2011" name="J. Bacteriol.">
        <title>Revised genome sequence of Brucella suis 1330.</title>
        <authorList>
            <person name="Tae H."/>
            <person name="Shallom S."/>
            <person name="Settlage R."/>
            <person name="Preston D."/>
            <person name="Adams L.G."/>
            <person name="Garner H.R."/>
        </authorList>
    </citation>
    <scope>NUCLEOTIDE SEQUENCE [LARGE SCALE GENOMIC DNA]</scope>
    <source>
        <strain>1330</strain>
    </source>
</reference>
<comment type="function">
    <text evidence="1">Produces ATP from ADP in the presence of a proton gradient across the membrane. The gamma chain is believed to be important in regulating ATPase activity and the flow of protons through the CF(0) complex.</text>
</comment>
<comment type="subunit">
    <text evidence="1">F-type ATPases have 2 components, CF(1) - the catalytic core - and CF(0) - the membrane proton channel. CF(1) has five subunits: alpha(3), beta(3), gamma(1), delta(1), epsilon(1). CF(0) has three main subunits: a, b and c.</text>
</comment>
<comment type="subcellular location">
    <subcellularLocation>
        <location evidence="1">Cell inner membrane</location>
        <topology evidence="1">Peripheral membrane protein</topology>
    </subcellularLocation>
</comment>
<comment type="similarity">
    <text evidence="1">Belongs to the ATPase gamma chain family.</text>
</comment>
<sequence length="292" mass="31813">MPSLKDLRNRIASVKATQKITKAMQMVAAAKLRRAQEAAEAARPYSQRMGAVLANIAQNVSGEDAPALMVGTGKDDVHLLVVCTAERGLCGGFNSQIARLARDHARKLLAEGKTVKIITVGKKGADILRREFSALLHDHVDLREVKQLAFVHADQIGHKIIKLFEEGAFDVCTLFYSEFKSVISQVPTAQQLIPASADNEAEMETAGDAIYEYEPDPAAILSTLIPRNISVQIFRALLENVAGEMGAKMSAMDNATRNAGDMINKLSITYNRQRQAQITKELIEIISGAEAL</sequence>
<dbReference type="EMBL" id="AE014291">
    <property type="protein sequence ID" value="AAN30695.1"/>
    <property type="molecule type" value="Genomic_DNA"/>
</dbReference>
<dbReference type="EMBL" id="CP002997">
    <property type="protein sequence ID" value="AEM19112.1"/>
    <property type="molecule type" value="Genomic_DNA"/>
</dbReference>
<dbReference type="RefSeq" id="WP_004689233.1">
    <property type="nucleotide sequence ID" value="NZ_KN046804.1"/>
</dbReference>
<dbReference type="SMR" id="Q8FYR4"/>
<dbReference type="KEGG" id="bms:BR1800"/>
<dbReference type="KEGG" id="bsi:BS1330_I1794"/>
<dbReference type="PATRIC" id="fig|204722.21.peg.1183"/>
<dbReference type="HOGENOM" id="CLU_050669_0_1_5"/>
<dbReference type="PhylomeDB" id="Q8FYR4"/>
<dbReference type="Proteomes" id="UP000007104">
    <property type="component" value="Chromosome I"/>
</dbReference>
<dbReference type="GO" id="GO:0005886">
    <property type="term" value="C:plasma membrane"/>
    <property type="evidence" value="ECO:0007669"/>
    <property type="project" value="UniProtKB-SubCell"/>
</dbReference>
<dbReference type="GO" id="GO:0045259">
    <property type="term" value="C:proton-transporting ATP synthase complex"/>
    <property type="evidence" value="ECO:0007669"/>
    <property type="project" value="UniProtKB-KW"/>
</dbReference>
<dbReference type="GO" id="GO:0005524">
    <property type="term" value="F:ATP binding"/>
    <property type="evidence" value="ECO:0007669"/>
    <property type="project" value="UniProtKB-UniRule"/>
</dbReference>
<dbReference type="GO" id="GO:0046933">
    <property type="term" value="F:proton-transporting ATP synthase activity, rotational mechanism"/>
    <property type="evidence" value="ECO:0007669"/>
    <property type="project" value="UniProtKB-UniRule"/>
</dbReference>
<dbReference type="GO" id="GO:0042777">
    <property type="term" value="P:proton motive force-driven plasma membrane ATP synthesis"/>
    <property type="evidence" value="ECO:0007669"/>
    <property type="project" value="UniProtKB-UniRule"/>
</dbReference>
<dbReference type="CDD" id="cd12151">
    <property type="entry name" value="F1-ATPase_gamma"/>
    <property type="match status" value="1"/>
</dbReference>
<dbReference type="FunFam" id="1.10.287.80:FF:000001">
    <property type="entry name" value="ATP synthase gamma chain"/>
    <property type="match status" value="1"/>
</dbReference>
<dbReference type="FunFam" id="1.10.287.80:FF:000003">
    <property type="entry name" value="ATP synthase gamma chain, chloroplastic"/>
    <property type="match status" value="1"/>
</dbReference>
<dbReference type="Gene3D" id="3.40.1380.10">
    <property type="match status" value="1"/>
</dbReference>
<dbReference type="Gene3D" id="1.10.287.80">
    <property type="entry name" value="ATP synthase, gamma subunit, helix hairpin domain"/>
    <property type="match status" value="1"/>
</dbReference>
<dbReference type="HAMAP" id="MF_00815">
    <property type="entry name" value="ATP_synth_gamma_bact"/>
    <property type="match status" value="1"/>
</dbReference>
<dbReference type="InterPro" id="IPR035968">
    <property type="entry name" value="ATP_synth_F1_ATPase_gsu"/>
</dbReference>
<dbReference type="InterPro" id="IPR000131">
    <property type="entry name" value="ATP_synth_F1_gsu"/>
</dbReference>
<dbReference type="InterPro" id="IPR023632">
    <property type="entry name" value="ATP_synth_F1_gsu_CS"/>
</dbReference>
<dbReference type="NCBIfam" id="TIGR01146">
    <property type="entry name" value="ATPsyn_F1gamma"/>
    <property type="match status" value="1"/>
</dbReference>
<dbReference type="NCBIfam" id="NF004146">
    <property type="entry name" value="PRK05621.1-4"/>
    <property type="match status" value="1"/>
</dbReference>
<dbReference type="PANTHER" id="PTHR11693">
    <property type="entry name" value="ATP SYNTHASE GAMMA CHAIN"/>
    <property type="match status" value="1"/>
</dbReference>
<dbReference type="PANTHER" id="PTHR11693:SF22">
    <property type="entry name" value="ATP SYNTHASE SUBUNIT GAMMA, MITOCHONDRIAL"/>
    <property type="match status" value="1"/>
</dbReference>
<dbReference type="Pfam" id="PF00231">
    <property type="entry name" value="ATP-synt"/>
    <property type="match status" value="1"/>
</dbReference>
<dbReference type="PIRSF" id="PIRSF039089">
    <property type="entry name" value="ATP_synthase_gamma"/>
    <property type="match status" value="1"/>
</dbReference>
<dbReference type="PRINTS" id="PR00126">
    <property type="entry name" value="ATPASEGAMMA"/>
</dbReference>
<dbReference type="SUPFAM" id="SSF52943">
    <property type="entry name" value="ATP synthase (F1-ATPase), gamma subunit"/>
    <property type="match status" value="1"/>
</dbReference>
<dbReference type="PROSITE" id="PS00153">
    <property type="entry name" value="ATPASE_GAMMA"/>
    <property type="match status" value="1"/>
</dbReference>
<organism>
    <name type="scientific">Brucella suis biovar 1 (strain 1330)</name>
    <dbReference type="NCBI Taxonomy" id="204722"/>
    <lineage>
        <taxon>Bacteria</taxon>
        <taxon>Pseudomonadati</taxon>
        <taxon>Pseudomonadota</taxon>
        <taxon>Alphaproteobacteria</taxon>
        <taxon>Hyphomicrobiales</taxon>
        <taxon>Brucellaceae</taxon>
        <taxon>Brucella/Ochrobactrum group</taxon>
        <taxon>Brucella</taxon>
    </lineage>
</organism>
<proteinExistence type="inferred from homology"/>
<evidence type="ECO:0000255" key="1">
    <source>
        <dbReference type="HAMAP-Rule" id="MF_00815"/>
    </source>
</evidence>
<feature type="chain" id="PRO_0000073251" description="ATP synthase gamma chain">
    <location>
        <begin position="1"/>
        <end position="292"/>
    </location>
</feature>